<comment type="function">
    <text>Guanine nucleotide-binding proteins (G proteins) are involved as modulators or transducers in various transmembrane signaling systems.</text>
</comment>
<comment type="subunit">
    <text>G proteins are composed of 3 units; alpha, beta and gamma. The alpha chain contains the guanine nucleotide binding site.</text>
</comment>
<comment type="similarity">
    <text evidence="3">Belongs to the G-alpha family. G(q) subfamily.</text>
</comment>
<name>GNA14_BOVIN</name>
<feature type="chain" id="PRO_0000203751" description="Guanine nucleotide-binding protein subunit alpha-14">
    <location>
        <begin position="1"/>
        <end position="355"/>
    </location>
</feature>
<feature type="domain" description="G-alpha" evidence="2">
    <location>
        <begin position="34"/>
        <end position="355"/>
    </location>
</feature>
<feature type="region of interest" description="G1 motif" evidence="2">
    <location>
        <begin position="37"/>
        <end position="50"/>
    </location>
</feature>
<feature type="region of interest" description="G2 motif" evidence="2">
    <location>
        <begin position="174"/>
        <end position="182"/>
    </location>
</feature>
<feature type="region of interest" description="G3 motif" evidence="2">
    <location>
        <begin position="197"/>
        <end position="206"/>
    </location>
</feature>
<feature type="region of interest" description="G4 motif" evidence="2">
    <location>
        <begin position="266"/>
        <end position="273"/>
    </location>
</feature>
<feature type="region of interest" description="G5 motif" evidence="2">
    <location>
        <begin position="325"/>
        <end position="330"/>
    </location>
</feature>
<feature type="binding site" evidence="1">
    <location>
        <begin position="42"/>
        <end position="49"/>
    </location>
    <ligand>
        <name>GTP</name>
        <dbReference type="ChEBI" id="CHEBI:37565"/>
    </ligand>
</feature>
<feature type="binding site" evidence="1">
    <location>
        <position position="49"/>
    </location>
    <ligand>
        <name>Mg(2+)</name>
        <dbReference type="ChEBI" id="CHEBI:18420"/>
    </ligand>
</feature>
<feature type="binding site" evidence="1">
    <location>
        <begin position="176"/>
        <end position="182"/>
    </location>
    <ligand>
        <name>GTP</name>
        <dbReference type="ChEBI" id="CHEBI:37565"/>
    </ligand>
</feature>
<feature type="binding site" evidence="1">
    <location>
        <position position="182"/>
    </location>
    <ligand>
        <name>Mg(2+)</name>
        <dbReference type="ChEBI" id="CHEBI:18420"/>
    </ligand>
</feature>
<feature type="binding site" evidence="1">
    <location>
        <begin position="201"/>
        <end position="205"/>
    </location>
    <ligand>
        <name>GTP</name>
        <dbReference type="ChEBI" id="CHEBI:37565"/>
    </ligand>
</feature>
<feature type="binding site" evidence="1">
    <location>
        <begin position="270"/>
        <end position="273"/>
    </location>
    <ligand>
        <name>GTP</name>
        <dbReference type="ChEBI" id="CHEBI:37565"/>
    </ligand>
</feature>
<feature type="binding site" evidence="1">
    <location>
        <position position="327"/>
    </location>
    <ligand>
        <name>GTP</name>
        <dbReference type="ChEBI" id="CHEBI:37565"/>
    </ligand>
</feature>
<gene>
    <name type="primary">GNA14</name>
</gene>
<evidence type="ECO:0000250" key="1"/>
<evidence type="ECO:0000255" key="2">
    <source>
        <dbReference type="PROSITE-ProRule" id="PRU01230"/>
    </source>
</evidence>
<evidence type="ECO:0000305" key="3"/>
<keyword id="KW-0342">GTP-binding</keyword>
<keyword id="KW-0460">Magnesium</keyword>
<keyword id="KW-0479">Metal-binding</keyword>
<keyword id="KW-0547">Nucleotide-binding</keyword>
<keyword id="KW-1185">Reference proteome</keyword>
<keyword id="KW-0807">Transducer</keyword>
<reference key="1">
    <citation type="journal article" date="1991" name="J. Biol. Chem.">
        <title>Identification of two novel GTP-binding protein alpha-subunits that lack apparent ADP-ribosylation sites for pertussis toxin.</title>
        <authorList>
            <person name="Nakamura F."/>
            <person name="Ogata K."/>
            <person name="Shiozaki K."/>
            <person name="Kameyama K."/>
            <person name="Ohara K."/>
            <person name="Haga T."/>
            <person name="Nukada T."/>
        </authorList>
    </citation>
    <scope>NUCLEOTIDE SEQUENCE [MRNA]</scope>
    <source>
        <tissue>Liver</tissue>
    </source>
</reference>
<accession>P38408</accession>
<dbReference type="EMBL" id="D90335">
    <property type="protein sequence ID" value="BAA14349.1"/>
    <property type="molecule type" value="mRNA"/>
</dbReference>
<dbReference type="PIR" id="A40891">
    <property type="entry name" value="A40891"/>
</dbReference>
<dbReference type="RefSeq" id="NP_776748.1">
    <property type="nucleotide sequence ID" value="NM_174323.2"/>
</dbReference>
<dbReference type="SMR" id="P38408"/>
<dbReference type="FunCoup" id="P38408">
    <property type="interactions" value="431"/>
</dbReference>
<dbReference type="STRING" id="9913.ENSBTAP00000058528"/>
<dbReference type="PaxDb" id="9913-ENSBTAP00000028151"/>
<dbReference type="GeneID" id="281789"/>
<dbReference type="KEGG" id="bta:281789"/>
<dbReference type="CTD" id="9630"/>
<dbReference type="VEuPathDB" id="HostDB:ENSBTAG00000021127"/>
<dbReference type="eggNOG" id="KOG0085">
    <property type="taxonomic scope" value="Eukaryota"/>
</dbReference>
<dbReference type="HOGENOM" id="CLU_014184_6_0_1"/>
<dbReference type="InParanoid" id="P38408"/>
<dbReference type="OMA" id="LRIHYVC"/>
<dbReference type="OrthoDB" id="5817230at2759"/>
<dbReference type="TreeFam" id="TF300673"/>
<dbReference type="Reactome" id="R-BTA-112043">
    <property type="pathway name" value="PLC beta mediated events"/>
</dbReference>
<dbReference type="Reactome" id="R-BTA-202040">
    <property type="pathway name" value="G-protein activation"/>
</dbReference>
<dbReference type="Reactome" id="R-BTA-399997">
    <property type="pathway name" value="Acetylcholine regulates insulin secretion"/>
</dbReference>
<dbReference type="Reactome" id="R-BTA-416476">
    <property type="pathway name" value="G alpha (q) signalling events"/>
</dbReference>
<dbReference type="Reactome" id="R-BTA-418592">
    <property type="pathway name" value="ADP signalling through P2Y purinoceptor 1"/>
</dbReference>
<dbReference type="Reactome" id="R-BTA-428930">
    <property type="pathway name" value="Thromboxane signalling through TP receptor"/>
</dbReference>
<dbReference type="Reactome" id="R-BTA-434316">
    <property type="pathway name" value="Fatty Acids bound to GPR40 (FFAR1) regulate insulin secretion"/>
</dbReference>
<dbReference type="Reactome" id="R-BTA-456926">
    <property type="pathway name" value="Thrombin signalling through proteinase activated receptors (PARs)"/>
</dbReference>
<dbReference type="Reactome" id="R-BTA-6814122">
    <property type="pathway name" value="Cooperation of PDCL (PhLP1) and TRiC/CCT in G-protein beta folding"/>
</dbReference>
<dbReference type="Proteomes" id="UP000009136">
    <property type="component" value="Chromosome 8"/>
</dbReference>
<dbReference type="Bgee" id="ENSBTAG00000021127">
    <property type="expression patterns" value="Expressed in prostate gland and 96 other cell types or tissues"/>
</dbReference>
<dbReference type="GO" id="GO:0005737">
    <property type="term" value="C:cytoplasm"/>
    <property type="evidence" value="ECO:0000318"/>
    <property type="project" value="GO_Central"/>
</dbReference>
<dbReference type="GO" id="GO:0005834">
    <property type="term" value="C:heterotrimeric G-protein complex"/>
    <property type="evidence" value="ECO:0000318"/>
    <property type="project" value="GO_Central"/>
</dbReference>
<dbReference type="GO" id="GO:0005886">
    <property type="term" value="C:plasma membrane"/>
    <property type="evidence" value="ECO:0000304"/>
    <property type="project" value="Reactome"/>
</dbReference>
<dbReference type="GO" id="GO:0001664">
    <property type="term" value="F:G protein-coupled receptor binding"/>
    <property type="evidence" value="ECO:0000318"/>
    <property type="project" value="GO_Central"/>
</dbReference>
<dbReference type="GO" id="GO:0031683">
    <property type="term" value="F:G-protein beta/gamma-subunit complex binding"/>
    <property type="evidence" value="ECO:0000318"/>
    <property type="project" value="GO_Central"/>
</dbReference>
<dbReference type="GO" id="GO:0005525">
    <property type="term" value="F:GTP binding"/>
    <property type="evidence" value="ECO:0007669"/>
    <property type="project" value="UniProtKB-KW"/>
</dbReference>
<dbReference type="GO" id="GO:0003924">
    <property type="term" value="F:GTPase activity"/>
    <property type="evidence" value="ECO:0000318"/>
    <property type="project" value="GO_Central"/>
</dbReference>
<dbReference type="GO" id="GO:0046872">
    <property type="term" value="F:metal ion binding"/>
    <property type="evidence" value="ECO:0007669"/>
    <property type="project" value="UniProtKB-KW"/>
</dbReference>
<dbReference type="GO" id="GO:0001508">
    <property type="term" value="P:action potential"/>
    <property type="evidence" value="ECO:0000318"/>
    <property type="project" value="GO_Central"/>
</dbReference>
<dbReference type="GO" id="GO:0007188">
    <property type="term" value="P:adenylate cyclase-modulating G protein-coupled receptor signaling pathway"/>
    <property type="evidence" value="ECO:0000318"/>
    <property type="project" value="GO_Central"/>
</dbReference>
<dbReference type="GO" id="GO:0060158">
    <property type="term" value="P:phospholipase C-activating dopamine receptor signaling pathway"/>
    <property type="evidence" value="ECO:0000318"/>
    <property type="project" value="GO_Central"/>
</dbReference>
<dbReference type="CDD" id="cd00066">
    <property type="entry name" value="G-alpha"/>
    <property type="match status" value="1"/>
</dbReference>
<dbReference type="FunFam" id="3.40.50.300:FF:003977">
    <property type="entry name" value="Guanine nucleotide-binding protein G(q) subunit alpha"/>
    <property type="match status" value="1"/>
</dbReference>
<dbReference type="FunFam" id="1.10.400.10:FF:000002">
    <property type="entry name" value="guanine nucleotide-binding protein G(Q) subunit alpha"/>
    <property type="match status" value="1"/>
</dbReference>
<dbReference type="FunFam" id="3.40.50.300:FF:000692">
    <property type="entry name" value="Guanine nucleotide-binding protein subunit alpha"/>
    <property type="match status" value="1"/>
</dbReference>
<dbReference type="Gene3D" id="1.10.400.10">
    <property type="entry name" value="GI Alpha 1, domain 2-like"/>
    <property type="match status" value="1"/>
</dbReference>
<dbReference type="Gene3D" id="3.40.50.300">
    <property type="entry name" value="P-loop containing nucleotide triphosphate hydrolases"/>
    <property type="match status" value="1"/>
</dbReference>
<dbReference type="InterPro" id="IPR000654">
    <property type="entry name" value="Gprotein_alpha_Q"/>
</dbReference>
<dbReference type="InterPro" id="IPR001019">
    <property type="entry name" value="Gprotein_alpha_su"/>
</dbReference>
<dbReference type="InterPro" id="IPR011025">
    <property type="entry name" value="GproteinA_insert"/>
</dbReference>
<dbReference type="InterPro" id="IPR027417">
    <property type="entry name" value="P-loop_NTPase"/>
</dbReference>
<dbReference type="PANTHER" id="PTHR10218">
    <property type="entry name" value="GTP-BINDING PROTEIN ALPHA SUBUNIT"/>
    <property type="match status" value="1"/>
</dbReference>
<dbReference type="PANTHER" id="PTHR10218:SF213">
    <property type="entry name" value="GUANINE NUCLEOTIDE-BINDING PROTEIN SUBUNIT ALPHA-14"/>
    <property type="match status" value="1"/>
</dbReference>
<dbReference type="Pfam" id="PF00503">
    <property type="entry name" value="G-alpha"/>
    <property type="match status" value="1"/>
</dbReference>
<dbReference type="PRINTS" id="PR00318">
    <property type="entry name" value="GPROTEINA"/>
</dbReference>
<dbReference type="PRINTS" id="PR00442">
    <property type="entry name" value="GPROTEINAQ"/>
</dbReference>
<dbReference type="SMART" id="SM00275">
    <property type="entry name" value="G_alpha"/>
    <property type="match status" value="1"/>
</dbReference>
<dbReference type="SUPFAM" id="SSF52540">
    <property type="entry name" value="P-loop containing nucleoside triphosphate hydrolases"/>
    <property type="match status" value="1"/>
</dbReference>
<dbReference type="SUPFAM" id="SSF47895">
    <property type="entry name" value="Transducin (alpha subunit), insertion domain"/>
    <property type="match status" value="1"/>
</dbReference>
<dbReference type="PROSITE" id="PS51882">
    <property type="entry name" value="G_ALPHA"/>
    <property type="match status" value="1"/>
</dbReference>
<protein>
    <recommendedName>
        <fullName>Guanine nucleotide-binding protein subunit alpha-14</fullName>
        <shortName>G alpha-14</shortName>
        <shortName>G-protein subunit alpha-14</shortName>
    </recommendedName>
    <alternativeName>
        <fullName>G-protein subunit GL1 alpha</fullName>
    </alternativeName>
</protein>
<proteinExistence type="evidence at transcript level"/>
<sequence length="355" mass="41499">MAGCCCLSAEEKESQRISAEIERQLRRDKKDARRELKLLLLGTGESGKSTFIKQMRIIHGSGYSDEDRKGFTKLVYQNIFTAMQAMIRAMDTLKIQYVCEQNKENAQLIREVEVDKVSTLSRDQVEAIKQLWQDPGIQECYDRRREYQLSDSAKYYLTDIDRIAMPAFVPTQQDVLRVRVPTTGIIEYPFDLENIIFRMVDVGGQRSERRKWIHCFESVTSIIFLVALSEYDQVLAECDNENRMEESKALFKTIITYPWFLNSSVILFLNKKDLLEEKIMYSHLISYFPEYTGPKQDVKAARDFILKLYQDQNPDKEKVIYSHFTCATDTENIRFVFAAVKDTILQLNLREFNLV</sequence>
<organism>
    <name type="scientific">Bos taurus</name>
    <name type="common">Bovine</name>
    <dbReference type="NCBI Taxonomy" id="9913"/>
    <lineage>
        <taxon>Eukaryota</taxon>
        <taxon>Metazoa</taxon>
        <taxon>Chordata</taxon>
        <taxon>Craniata</taxon>
        <taxon>Vertebrata</taxon>
        <taxon>Euteleostomi</taxon>
        <taxon>Mammalia</taxon>
        <taxon>Eutheria</taxon>
        <taxon>Laurasiatheria</taxon>
        <taxon>Artiodactyla</taxon>
        <taxon>Ruminantia</taxon>
        <taxon>Pecora</taxon>
        <taxon>Bovidae</taxon>
        <taxon>Bovinae</taxon>
        <taxon>Bos</taxon>
    </lineage>
</organism>